<comment type="catalytic activity">
    <reaction evidence="1">
        <text>1-(2-carboxyphenylamino)-1-deoxy-D-ribulose 5-phosphate + H(+) = (1S,2R)-1-C-(indol-3-yl)glycerol 3-phosphate + CO2 + H2O</text>
        <dbReference type="Rhea" id="RHEA:23476"/>
        <dbReference type="ChEBI" id="CHEBI:15377"/>
        <dbReference type="ChEBI" id="CHEBI:15378"/>
        <dbReference type="ChEBI" id="CHEBI:16526"/>
        <dbReference type="ChEBI" id="CHEBI:58613"/>
        <dbReference type="ChEBI" id="CHEBI:58866"/>
        <dbReference type="EC" id="4.1.1.48"/>
    </reaction>
</comment>
<comment type="pathway">
    <text evidence="1">Amino-acid biosynthesis; L-tryptophan biosynthesis; L-tryptophan from chorismate: step 4/5.</text>
</comment>
<comment type="similarity">
    <text evidence="1">Belongs to the TrpC family.</text>
</comment>
<proteinExistence type="inferred from homology"/>
<accession>B2I6S5</accession>
<name>TRPC_XYLF2</name>
<gene>
    <name evidence="1" type="primary">trpC</name>
    <name type="ordered locus">XfasM23_0160</name>
</gene>
<feature type="chain" id="PRO_1000095909" description="Indole-3-glycerol phosphate synthase">
    <location>
        <begin position="1"/>
        <end position="264"/>
    </location>
</feature>
<protein>
    <recommendedName>
        <fullName evidence="1">Indole-3-glycerol phosphate synthase</fullName>
        <shortName evidence="1">IGPS</shortName>
        <ecNumber evidence="1">4.1.1.48</ecNumber>
    </recommendedName>
</protein>
<sequence length="264" mass="28654">MSNILTKILARKVEEIAERLLHVSQAELVARCADLPTPRGFAAALQATIAHGDPAVIAEIKKASPSKGVLREDFRPAEIAISYELGGASCLSVLTDVHFFKGHDDYLSQARDACTLPVLRKDFTIDPYQVYEARVLGADCILLIVAALDDAQLVDLSGLALQLGMDVLVEVHDIDELERAIQISAPLIGINNRNLSTFNVSLETTLTMKGLVPRDRLLVSESGILTSADVQRLRAAGVNAFLVGEAFMRAAEPGESLREMFFIT</sequence>
<keyword id="KW-0028">Amino-acid biosynthesis</keyword>
<keyword id="KW-0057">Aromatic amino acid biosynthesis</keyword>
<keyword id="KW-0210">Decarboxylase</keyword>
<keyword id="KW-0456">Lyase</keyword>
<keyword id="KW-0822">Tryptophan biosynthesis</keyword>
<reference key="1">
    <citation type="journal article" date="2010" name="J. Bacteriol.">
        <title>Whole genome sequences of two Xylella fastidiosa strains (M12 and M23) causing almond leaf scorch disease in California.</title>
        <authorList>
            <person name="Chen J."/>
            <person name="Xie G."/>
            <person name="Han S."/>
            <person name="Chertkov O."/>
            <person name="Sims D."/>
            <person name="Civerolo E.L."/>
        </authorList>
    </citation>
    <scope>NUCLEOTIDE SEQUENCE [LARGE SCALE GENOMIC DNA]</scope>
    <source>
        <strain>M23</strain>
    </source>
</reference>
<evidence type="ECO:0000255" key="1">
    <source>
        <dbReference type="HAMAP-Rule" id="MF_00134"/>
    </source>
</evidence>
<dbReference type="EC" id="4.1.1.48" evidence="1"/>
<dbReference type="EMBL" id="CP001011">
    <property type="protein sequence ID" value="ACB91617.1"/>
    <property type="molecule type" value="Genomic_DNA"/>
</dbReference>
<dbReference type="RefSeq" id="WP_004572975.1">
    <property type="nucleotide sequence ID" value="NC_010577.1"/>
</dbReference>
<dbReference type="SMR" id="B2I6S5"/>
<dbReference type="GeneID" id="93903863"/>
<dbReference type="KEGG" id="xfn:XfasM23_0160"/>
<dbReference type="HOGENOM" id="CLU_034247_2_0_6"/>
<dbReference type="UniPathway" id="UPA00035">
    <property type="reaction ID" value="UER00043"/>
</dbReference>
<dbReference type="Proteomes" id="UP000001698">
    <property type="component" value="Chromosome"/>
</dbReference>
<dbReference type="GO" id="GO:0004425">
    <property type="term" value="F:indole-3-glycerol-phosphate synthase activity"/>
    <property type="evidence" value="ECO:0007669"/>
    <property type="project" value="UniProtKB-UniRule"/>
</dbReference>
<dbReference type="GO" id="GO:0004640">
    <property type="term" value="F:phosphoribosylanthranilate isomerase activity"/>
    <property type="evidence" value="ECO:0007669"/>
    <property type="project" value="TreeGrafter"/>
</dbReference>
<dbReference type="GO" id="GO:0000162">
    <property type="term" value="P:L-tryptophan biosynthetic process"/>
    <property type="evidence" value="ECO:0007669"/>
    <property type="project" value="UniProtKB-UniRule"/>
</dbReference>
<dbReference type="CDD" id="cd00331">
    <property type="entry name" value="IGPS"/>
    <property type="match status" value="1"/>
</dbReference>
<dbReference type="FunFam" id="3.20.20.70:FF:000024">
    <property type="entry name" value="Indole-3-glycerol phosphate synthase"/>
    <property type="match status" value="1"/>
</dbReference>
<dbReference type="Gene3D" id="3.20.20.70">
    <property type="entry name" value="Aldolase class I"/>
    <property type="match status" value="1"/>
</dbReference>
<dbReference type="HAMAP" id="MF_00134_B">
    <property type="entry name" value="IGPS_B"/>
    <property type="match status" value="1"/>
</dbReference>
<dbReference type="InterPro" id="IPR013785">
    <property type="entry name" value="Aldolase_TIM"/>
</dbReference>
<dbReference type="InterPro" id="IPR045186">
    <property type="entry name" value="Indole-3-glycerol_P_synth"/>
</dbReference>
<dbReference type="InterPro" id="IPR013798">
    <property type="entry name" value="Indole-3-glycerol_P_synth_dom"/>
</dbReference>
<dbReference type="InterPro" id="IPR001468">
    <property type="entry name" value="Indole-3-GlycerolPSynthase_CS"/>
</dbReference>
<dbReference type="InterPro" id="IPR011060">
    <property type="entry name" value="RibuloseP-bd_barrel"/>
</dbReference>
<dbReference type="NCBIfam" id="NF001370">
    <property type="entry name" value="PRK00278.1-2"/>
    <property type="match status" value="1"/>
</dbReference>
<dbReference type="NCBIfam" id="NF001373">
    <property type="entry name" value="PRK00278.1-6"/>
    <property type="match status" value="1"/>
</dbReference>
<dbReference type="NCBIfam" id="NF001377">
    <property type="entry name" value="PRK00278.2-4"/>
    <property type="match status" value="1"/>
</dbReference>
<dbReference type="PANTHER" id="PTHR22854:SF2">
    <property type="entry name" value="INDOLE-3-GLYCEROL-PHOSPHATE SYNTHASE"/>
    <property type="match status" value="1"/>
</dbReference>
<dbReference type="PANTHER" id="PTHR22854">
    <property type="entry name" value="TRYPTOPHAN BIOSYNTHESIS PROTEIN"/>
    <property type="match status" value="1"/>
</dbReference>
<dbReference type="Pfam" id="PF00218">
    <property type="entry name" value="IGPS"/>
    <property type="match status" value="1"/>
</dbReference>
<dbReference type="SUPFAM" id="SSF51366">
    <property type="entry name" value="Ribulose-phoshate binding barrel"/>
    <property type="match status" value="1"/>
</dbReference>
<dbReference type="PROSITE" id="PS00614">
    <property type="entry name" value="IGPS"/>
    <property type="match status" value="1"/>
</dbReference>
<organism>
    <name type="scientific">Xylella fastidiosa (strain M23)</name>
    <dbReference type="NCBI Taxonomy" id="405441"/>
    <lineage>
        <taxon>Bacteria</taxon>
        <taxon>Pseudomonadati</taxon>
        <taxon>Pseudomonadota</taxon>
        <taxon>Gammaproteobacteria</taxon>
        <taxon>Lysobacterales</taxon>
        <taxon>Lysobacteraceae</taxon>
        <taxon>Xylella</taxon>
    </lineage>
</organism>